<organism>
    <name type="scientific">Aspergillus fumigatus (strain ATCC MYA-4609 / CBS 101355 / FGSC A1100 / Af293)</name>
    <name type="common">Neosartorya fumigata</name>
    <dbReference type="NCBI Taxonomy" id="330879"/>
    <lineage>
        <taxon>Eukaryota</taxon>
        <taxon>Fungi</taxon>
        <taxon>Dikarya</taxon>
        <taxon>Ascomycota</taxon>
        <taxon>Pezizomycotina</taxon>
        <taxon>Eurotiomycetes</taxon>
        <taxon>Eurotiomycetidae</taxon>
        <taxon>Eurotiales</taxon>
        <taxon>Aspergillaceae</taxon>
        <taxon>Aspergillus</taxon>
        <taxon>Aspergillus subgen. Fumigati</taxon>
    </lineage>
</organism>
<evidence type="ECO:0000250" key="1"/>
<evidence type="ECO:0000250" key="2">
    <source>
        <dbReference type="UniProtKB" id="Q12354"/>
    </source>
</evidence>
<evidence type="ECO:0000305" key="3"/>
<reference key="1">
    <citation type="journal article" date="2005" name="Nature">
        <title>Genomic sequence of the pathogenic and allergenic filamentous fungus Aspergillus fumigatus.</title>
        <authorList>
            <person name="Nierman W.C."/>
            <person name="Pain A."/>
            <person name="Anderson M.J."/>
            <person name="Wortman J.R."/>
            <person name="Kim H.S."/>
            <person name="Arroyo J."/>
            <person name="Berriman M."/>
            <person name="Abe K."/>
            <person name="Archer D.B."/>
            <person name="Bermejo C."/>
            <person name="Bennett J.W."/>
            <person name="Bowyer P."/>
            <person name="Chen D."/>
            <person name="Collins M."/>
            <person name="Coulsen R."/>
            <person name="Davies R."/>
            <person name="Dyer P.S."/>
            <person name="Farman M.L."/>
            <person name="Fedorova N."/>
            <person name="Fedorova N.D."/>
            <person name="Feldblyum T.V."/>
            <person name="Fischer R."/>
            <person name="Fosker N."/>
            <person name="Fraser A."/>
            <person name="Garcia J.L."/>
            <person name="Garcia M.J."/>
            <person name="Goble A."/>
            <person name="Goldman G.H."/>
            <person name="Gomi K."/>
            <person name="Griffith-Jones S."/>
            <person name="Gwilliam R."/>
            <person name="Haas B.J."/>
            <person name="Haas H."/>
            <person name="Harris D.E."/>
            <person name="Horiuchi H."/>
            <person name="Huang J."/>
            <person name="Humphray S."/>
            <person name="Jimenez J."/>
            <person name="Keller N."/>
            <person name="Khouri H."/>
            <person name="Kitamoto K."/>
            <person name="Kobayashi T."/>
            <person name="Konzack S."/>
            <person name="Kulkarni R."/>
            <person name="Kumagai T."/>
            <person name="Lafton A."/>
            <person name="Latge J.-P."/>
            <person name="Li W."/>
            <person name="Lord A."/>
            <person name="Lu C."/>
            <person name="Majoros W.H."/>
            <person name="May G.S."/>
            <person name="Miller B.L."/>
            <person name="Mohamoud Y."/>
            <person name="Molina M."/>
            <person name="Monod M."/>
            <person name="Mouyna I."/>
            <person name="Mulligan S."/>
            <person name="Murphy L.D."/>
            <person name="O'Neil S."/>
            <person name="Paulsen I."/>
            <person name="Penalva M.A."/>
            <person name="Pertea M."/>
            <person name="Price C."/>
            <person name="Pritchard B.L."/>
            <person name="Quail M.A."/>
            <person name="Rabbinowitsch E."/>
            <person name="Rawlins N."/>
            <person name="Rajandream M.A."/>
            <person name="Reichard U."/>
            <person name="Renauld H."/>
            <person name="Robson G.D."/>
            <person name="Rodriguez de Cordoba S."/>
            <person name="Rodriguez-Pena J.M."/>
            <person name="Ronning C.M."/>
            <person name="Rutter S."/>
            <person name="Salzberg S.L."/>
            <person name="Sanchez M."/>
            <person name="Sanchez-Ferrero J.C."/>
            <person name="Saunders D."/>
            <person name="Seeger K."/>
            <person name="Squares R."/>
            <person name="Squares S."/>
            <person name="Takeuchi M."/>
            <person name="Tekaia F."/>
            <person name="Turner G."/>
            <person name="Vazquez de Aldana C.R."/>
            <person name="Weidman J."/>
            <person name="White O."/>
            <person name="Woodward J.R."/>
            <person name="Yu J.-H."/>
            <person name="Fraser C.M."/>
            <person name="Galagan J.E."/>
            <person name="Asai K."/>
            <person name="Machida M."/>
            <person name="Hall N."/>
            <person name="Barrell B.G."/>
            <person name="Denning D.W."/>
        </authorList>
    </citation>
    <scope>NUCLEOTIDE SEQUENCE [LARGE SCALE GENOMIC DNA]</scope>
    <source>
        <strain>ATCC MYA-4609 / CBS 101355 / FGSC A1100 / Af293</strain>
    </source>
</reference>
<feature type="chain" id="PRO_0000229004" description="Acyl-protein thioesterase 1">
    <location>
        <begin position="1"/>
        <end position="241"/>
    </location>
</feature>
<feature type="active site" description="Charge relay system" evidence="1">
    <location>
        <position position="122"/>
    </location>
</feature>
<feature type="active site" description="Charge relay system" evidence="1">
    <location>
        <position position="178"/>
    </location>
</feature>
<feature type="active site" description="Charge relay system" evidence="1">
    <location>
        <position position="211"/>
    </location>
</feature>
<sequence>MAPPRAPYIVPALKKHTATVIMAHGLGDRMSLAQNWRRRGMFDEVAFIFPNAPMIPITVNFGMTMPGWHDLTKLGRELDYESAIRHQDEPGVLRSRDYFNTLIKEQIDKGIKPSRIVLGGFSQGAAISVFTGITCKEKLGGVFGLSSYLVLSDKLKNYIPENWPNKKTPFFLAHGLEDEIVLFDFGDLSAKKMKEIGLEDVTFKSYPNLGHSADPVEIEDLARFLQKVIPPEDDGQASAGL</sequence>
<name>APTH1_ASPFU</name>
<comment type="function">
    <text evidence="2">Hydrolyzes fatty acids from S-acylated cysteine residues in proteins with a strong preference for palmitoylated G-alpha proteins over other acyl substrates. Mediates the deacylation of G-alpha proteins such as GPA1 in vivo, but has weak or no activity toward palmitoylated Ras proteins. Has weak lysophospholipase activity in vitro; however such activity may not exist in vivo.</text>
</comment>
<comment type="catalytic activity">
    <reaction evidence="2">
        <text>S-hexadecanoyl-L-cysteinyl-[protein] + H2O = L-cysteinyl-[protein] + hexadecanoate + H(+)</text>
        <dbReference type="Rhea" id="RHEA:19233"/>
        <dbReference type="Rhea" id="RHEA-COMP:10131"/>
        <dbReference type="Rhea" id="RHEA-COMP:11032"/>
        <dbReference type="ChEBI" id="CHEBI:7896"/>
        <dbReference type="ChEBI" id="CHEBI:15377"/>
        <dbReference type="ChEBI" id="CHEBI:15378"/>
        <dbReference type="ChEBI" id="CHEBI:29950"/>
        <dbReference type="ChEBI" id="CHEBI:74151"/>
        <dbReference type="EC" id="3.1.2.22"/>
    </reaction>
</comment>
<comment type="subcellular location">
    <subcellularLocation>
        <location evidence="2">Cytoplasm</location>
    </subcellularLocation>
    <subcellularLocation>
        <location evidence="2">Nucleus</location>
    </subcellularLocation>
</comment>
<comment type="similarity">
    <text evidence="3">Belongs to the AB hydrolase superfamily. AB hydrolase 2 family.</text>
</comment>
<dbReference type="EC" id="3.1.2.-" evidence="2"/>
<dbReference type="EC" id="3.1.2.22" evidence="2"/>
<dbReference type="EMBL" id="AAHF01000012">
    <property type="protein sequence ID" value="EAL85761.1"/>
    <property type="molecule type" value="Genomic_DNA"/>
</dbReference>
<dbReference type="RefSeq" id="XP_747799.1">
    <property type="nucleotide sequence ID" value="XM_742706.1"/>
</dbReference>
<dbReference type="SMR" id="Q4WCX7"/>
<dbReference type="FunCoup" id="Q4WCX7">
    <property type="interactions" value="491"/>
</dbReference>
<dbReference type="STRING" id="330879.Q4WCX7"/>
<dbReference type="ESTHER" id="aspfu-apth1">
    <property type="family name" value="LYsophospholipase_carboxylesterase"/>
</dbReference>
<dbReference type="EnsemblFungi" id="EAL85761">
    <property type="protein sequence ID" value="EAL85761"/>
    <property type="gene ID" value="AFUA_6G02780"/>
</dbReference>
<dbReference type="GeneID" id="3505161"/>
<dbReference type="KEGG" id="afm:AFUA_6G02780"/>
<dbReference type="eggNOG" id="KOG2112">
    <property type="taxonomic scope" value="Eukaryota"/>
</dbReference>
<dbReference type="HOGENOM" id="CLU_049413_3_8_1"/>
<dbReference type="InParanoid" id="Q4WCX7"/>
<dbReference type="OMA" id="WYDILAM"/>
<dbReference type="OrthoDB" id="2418081at2759"/>
<dbReference type="Proteomes" id="UP000002530">
    <property type="component" value="Chromosome 6"/>
</dbReference>
<dbReference type="GO" id="GO:0005737">
    <property type="term" value="C:cytoplasm"/>
    <property type="evidence" value="ECO:0000318"/>
    <property type="project" value="GO_Central"/>
</dbReference>
<dbReference type="GO" id="GO:0005634">
    <property type="term" value="C:nucleus"/>
    <property type="evidence" value="ECO:0007669"/>
    <property type="project" value="UniProtKB-SubCell"/>
</dbReference>
<dbReference type="GO" id="GO:0052689">
    <property type="term" value="F:carboxylic ester hydrolase activity"/>
    <property type="evidence" value="ECO:0000318"/>
    <property type="project" value="GO_Central"/>
</dbReference>
<dbReference type="GO" id="GO:0008474">
    <property type="term" value="F:palmitoyl-(protein) hydrolase activity"/>
    <property type="evidence" value="ECO:0000318"/>
    <property type="project" value="GO_Central"/>
</dbReference>
<dbReference type="GO" id="GO:0006631">
    <property type="term" value="P:fatty acid metabolic process"/>
    <property type="evidence" value="ECO:0007669"/>
    <property type="project" value="UniProtKB-KW"/>
</dbReference>
<dbReference type="Gene3D" id="3.40.50.1820">
    <property type="entry name" value="alpha/beta hydrolase"/>
    <property type="match status" value="1"/>
</dbReference>
<dbReference type="InterPro" id="IPR029058">
    <property type="entry name" value="AB_hydrolase_fold"/>
</dbReference>
<dbReference type="InterPro" id="IPR050565">
    <property type="entry name" value="LYPA1-2/EST-like"/>
</dbReference>
<dbReference type="InterPro" id="IPR003140">
    <property type="entry name" value="PLipase/COase/thioEstase"/>
</dbReference>
<dbReference type="PANTHER" id="PTHR10655:SF17">
    <property type="entry name" value="LYSOPHOSPHOLIPASE-LIKE PROTEIN 1"/>
    <property type="match status" value="1"/>
</dbReference>
<dbReference type="PANTHER" id="PTHR10655">
    <property type="entry name" value="LYSOPHOSPHOLIPASE-RELATED"/>
    <property type="match status" value="1"/>
</dbReference>
<dbReference type="Pfam" id="PF02230">
    <property type="entry name" value="Abhydrolase_2"/>
    <property type="match status" value="1"/>
</dbReference>
<dbReference type="SUPFAM" id="SSF53474">
    <property type="entry name" value="alpha/beta-Hydrolases"/>
    <property type="match status" value="1"/>
</dbReference>
<gene>
    <name type="ORF">AFUA_6G02780</name>
</gene>
<proteinExistence type="inferred from homology"/>
<accession>Q4WCX7</accession>
<keyword id="KW-0963">Cytoplasm</keyword>
<keyword id="KW-0276">Fatty acid metabolism</keyword>
<keyword id="KW-0378">Hydrolase</keyword>
<keyword id="KW-0443">Lipid metabolism</keyword>
<keyword id="KW-0539">Nucleus</keyword>
<keyword id="KW-1185">Reference proteome</keyword>
<keyword id="KW-0719">Serine esterase</keyword>
<protein>
    <recommendedName>
        <fullName>Acyl-protein thioesterase 1</fullName>
        <ecNumber evidence="2">3.1.2.-</ecNumber>
    </recommendedName>
    <alternativeName>
        <fullName>Palmitoyl-protein hydrolase</fullName>
        <ecNumber evidence="2">3.1.2.22</ecNumber>
    </alternativeName>
</protein>